<organismHost>
    <name type="scientific">Acheta domesticus</name>
    <name type="common">House cricket</name>
    <dbReference type="NCBI Taxonomy" id="6997"/>
</organismHost>
<organismHost>
    <name type="scientific">Chilo suppressalis</name>
    <name type="common">Asiatic rice borer moth</name>
    <dbReference type="NCBI Taxonomy" id="168631"/>
</organismHost>
<organismHost>
    <name type="scientific">Gryllus bimaculatus</name>
    <name type="common">Two-spotted cricket</name>
    <dbReference type="NCBI Taxonomy" id="6999"/>
</organismHost>
<organismHost>
    <name type="scientific">Gryllus campestris</name>
    <dbReference type="NCBI Taxonomy" id="58607"/>
</organismHost>
<organismHost>
    <name type="scientific">Spodoptera frugiperda</name>
    <name type="common">Fall armyworm</name>
    <dbReference type="NCBI Taxonomy" id="7108"/>
</organismHost>
<gene>
    <name type="ORF">IIV6-032R</name>
</gene>
<organism>
    <name type="scientific">Invertebrate iridescent virus 6</name>
    <name type="common">IIV-6</name>
    <name type="synonym">Chilo iridescent virus</name>
    <dbReference type="NCBI Taxonomy" id="176652"/>
    <lineage>
        <taxon>Viruses</taxon>
        <taxon>Varidnaviria</taxon>
        <taxon>Bamfordvirae</taxon>
        <taxon>Nucleocytoviricota</taxon>
        <taxon>Megaviricetes</taxon>
        <taxon>Pimascovirales</taxon>
        <taxon>Iridoviridae</taxon>
        <taxon>Betairidovirinae</taxon>
        <taxon>Iridovirus</taxon>
    </lineage>
</organism>
<proteinExistence type="predicted"/>
<reference key="1">
    <citation type="journal article" date="2001" name="Virology">
        <title>Analysis of the first complete DNA sequence of an invertebrate iridovirus: coding strategy of the genome of Chilo iridescent virus.</title>
        <authorList>
            <person name="Jakob N.J."/>
            <person name="Mueller K."/>
            <person name="Bahr U."/>
            <person name="Darai G."/>
        </authorList>
    </citation>
    <scope>NUCLEOTIDE SEQUENCE [LARGE SCALE GENOMIC DNA]</scope>
</reference>
<reference key="2">
    <citation type="journal article" date="2007" name="Virol. J.">
        <title>Comparative genomic analysis of the family Iridoviridae: re-annotating and defining the core set of iridovirus genes.</title>
        <authorList>
            <person name="Eaton H.E."/>
            <person name="Metcalf J."/>
            <person name="Penny E."/>
            <person name="Tcherepanov V."/>
            <person name="Upton C."/>
            <person name="Brunetti C.R."/>
        </authorList>
    </citation>
    <scope>GENOME REANNOTATION</scope>
</reference>
<sequence length="100" mass="11681">MGVYKFCYNKKKEVGQVAVLQKERLIFYIVTKEKSYLKPTLANFSNAIDSLYNECLLRKCCKLAIPKIGCCLDRLYWKTVKNIIIDKLCKKGIEVVVYYI</sequence>
<feature type="chain" id="PRO_0000377965" description="Uncharacterized protein 032R">
    <location>
        <begin position="1"/>
        <end position="100"/>
    </location>
</feature>
<name>032R_IIV6</name>
<protein>
    <recommendedName>
        <fullName>Uncharacterized protein 032R</fullName>
    </recommendedName>
</protein>
<accession>Q91G65</accession>
<keyword id="KW-1185">Reference proteome</keyword>
<dbReference type="EMBL" id="AF303741">
    <property type="protein sequence ID" value="AAK81967.1"/>
    <property type="molecule type" value="Genomic_DNA"/>
</dbReference>
<dbReference type="RefSeq" id="NP_149495.1">
    <property type="nucleotide sequence ID" value="NC_003038.1"/>
</dbReference>
<dbReference type="SMR" id="Q91G65"/>
<dbReference type="KEGG" id="vg:1733207"/>
<dbReference type="OrthoDB" id="27478at10239"/>
<dbReference type="Proteomes" id="UP000001359">
    <property type="component" value="Genome"/>
</dbReference>
<dbReference type="GO" id="GO:0140291">
    <property type="term" value="P:peptidyl-glutamate ADP-deribosylation"/>
    <property type="evidence" value="ECO:0007669"/>
    <property type="project" value="TreeGrafter"/>
</dbReference>
<dbReference type="Gene3D" id="3.40.220.10">
    <property type="entry name" value="Leucine Aminopeptidase, subunit E, domain 1"/>
    <property type="match status" value="1"/>
</dbReference>
<dbReference type="InterPro" id="IPR050892">
    <property type="entry name" value="ADP-ribose_metab_enzymes"/>
</dbReference>
<dbReference type="InterPro" id="IPR043472">
    <property type="entry name" value="Macro_dom-like"/>
</dbReference>
<dbReference type="PANTHER" id="PTHR12521:SF0">
    <property type="entry name" value="ADP-RIBOSE GLYCOHYDROLASE OARD1"/>
    <property type="match status" value="1"/>
</dbReference>
<dbReference type="PANTHER" id="PTHR12521">
    <property type="entry name" value="PROTEIN C6ORF130"/>
    <property type="match status" value="1"/>
</dbReference>
<dbReference type="SUPFAM" id="SSF52949">
    <property type="entry name" value="Macro domain-like"/>
    <property type="match status" value="1"/>
</dbReference>